<reference key="1">
    <citation type="journal article" date="2006" name="Nat. Biotechnol.">
        <title>Complete genome sequence of the entomopathogenic and metabolically versatile soil bacterium Pseudomonas entomophila.</title>
        <authorList>
            <person name="Vodovar N."/>
            <person name="Vallenet D."/>
            <person name="Cruveiller S."/>
            <person name="Rouy Z."/>
            <person name="Barbe V."/>
            <person name="Acosta C."/>
            <person name="Cattolico L."/>
            <person name="Jubin C."/>
            <person name="Lajus A."/>
            <person name="Segurens B."/>
            <person name="Vacherie B."/>
            <person name="Wincker P."/>
            <person name="Weissenbach J."/>
            <person name="Lemaitre B."/>
            <person name="Medigue C."/>
            <person name="Boccard F."/>
        </authorList>
    </citation>
    <scope>NUCLEOTIDE SEQUENCE [LARGE SCALE GENOMIC DNA]</scope>
    <source>
        <strain>L48</strain>
    </source>
</reference>
<keyword id="KW-0975">Bacterial flagellum</keyword>
<keyword id="KW-0998">Cell outer membrane</keyword>
<keyword id="KW-0449">Lipoprotein</keyword>
<keyword id="KW-0472">Membrane</keyword>
<keyword id="KW-0564">Palmitate</keyword>
<keyword id="KW-0732">Signal</keyword>
<comment type="function">
    <text evidence="1">Assembles around the rod to form the L-ring and probably protects the motor/basal body from shearing forces during rotation.</text>
</comment>
<comment type="subunit">
    <text evidence="1">The basal body constitutes a major portion of the flagellar organelle and consists of four rings (L,P,S, and M) mounted on a central rod.</text>
</comment>
<comment type="subcellular location">
    <subcellularLocation>
        <location evidence="1">Cell outer membrane</location>
        <topology evidence="1">Lipid-anchor</topology>
    </subcellularLocation>
    <subcellularLocation>
        <location evidence="1">Bacterial flagellum basal body</location>
    </subcellularLocation>
</comment>
<comment type="similarity">
    <text evidence="1">Belongs to the FlgH family.</text>
</comment>
<gene>
    <name evidence="1" type="primary">flgH</name>
    <name type="ordered locus">PSEEN3835</name>
</gene>
<accession>Q1I732</accession>
<sequence length="231" mass="24340">MKHLLSVFALGGAVLLAGCVAPTPKPNDPYYAPVLPRTPLPAAANNGSIYQAGFEQSLYTDRKAFRVGDIITITLNERTSASKNAGSQIQKNSKADIGLTSLFGSSPNTNNPFGGGDLSLEAGYSGDRTTKGDSKATQGNTLTGSITVTVAEVLPNGIIAVRGEKWMTLNTGEELVRIAGLVRADDIATDNTVPSTRVADARITYSGTGSFADASQPGWLDRFFISPLWPF</sequence>
<proteinExistence type="inferred from homology"/>
<organism>
    <name type="scientific">Pseudomonas entomophila (strain L48)</name>
    <dbReference type="NCBI Taxonomy" id="384676"/>
    <lineage>
        <taxon>Bacteria</taxon>
        <taxon>Pseudomonadati</taxon>
        <taxon>Pseudomonadota</taxon>
        <taxon>Gammaproteobacteria</taxon>
        <taxon>Pseudomonadales</taxon>
        <taxon>Pseudomonadaceae</taxon>
        <taxon>Pseudomonas</taxon>
    </lineage>
</organism>
<evidence type="ECO:0000255" key="1">
    <source>
        <dbReference type="HAMAP-Rule" id="MF_00415"/>
    </source>
</evidence>
<dbReference type="EMBL" id="CT573326">
    <property type="protein sequence ID" value="CAK16550.1"/>
    <property type="molecule type" value="Genomic_DNA"/>
</dbReference>
<dbReference type="RefSeq" id="WP_011534927.1">
    <property type="nucleotide sequence ID" value="NC_008027.1"/>
</dbReference>
<dbReference type="SMR" id="Q1I732"/>
<dbReference type="STRING" id="384676.PSEEN3835"/>
<dbReference type="GeneID" id="32806873"/>
<dbReference type="KEGG" id="pen:PSEEN3835"/>
<dbReference type="eggNOG" id="COG2063">
    <property type="taxonomic scope" value="Bacteria"/>
</dbReference>
<dbReference type="HOGENOM" id="CLU_069313_0_2_6"/>
<dbReference type="OrthoDB" id="9789463at2"/>
<dbReference type="Proteomes" id="UP000000658">
    <property type="component" value="Chromosome"/>
</dbReference>
<dbReference type="GO" id="GO:0009427">
    <property type="term" value="C:bacterial-type flagellum basal body, distal rod, L ring"/>
    <property type="evidence" value="ECO:0007669"/>
    <property type="project" value="InterPro"/>
</dbReference>
<dbReference type="GO" id="GO:0009279">
    <property type="term" value="C:cell outer membrane"/>
    <property type="evidence" value="ECO:0007669"/>
    <property type="project" value="UniProtKB-SubCell"/>
</dbReference>
<dbReference type="GO" id="GO:0003774">
    <property type="term" value="F:cytoskeletal motor activity"/>
    <property type="evidence" value="ECO:0007669"/>
    <property type="project" value="InterPro"/>
</dbReference>
<dbReference type="GO" id="GO:0071973">
    <property type="term" value="P:bacterial-type flagellum-dependent cell motility"/>
    <property type="evidence" value="ECO:0007669"/>
    <property type="project" value="InterPro"/>
</dbReference>
<dbReference type="HAMAP" id="MF_00415">
    <property type="entry name" value="FlgH"/>
    <property type="match status" value="1"/>
</dbReference>
<dbReference type="InterPro" id="IPR000527">
    <property type="entry name" value="Flag_Lring"/>
</dbReference>
<dbReference type="NCBIfam" id="NF001304">
    <property type="entry name" value="PRK00249.1-4"/>
    <property type="match status" value="1"/>
</dbReference>
<dbReference type="PANTHER" id="PTHR34933">
    <property type="entry name" value="FLAGELLAR L-RING PROTEIN"/>
    <property type="match status" value="1"/>
</dbReference>
<dbReference type="PANTHER" id="PTHR34933:SF1">
    <property type="entry name" value="FLAGELLAR L-RING PROTEIN"/>
    <property type="match status" value="1"/>
</dbReference>
<dbReference type="Pfam" id="PF02107">
    <property type="entry name" value="FlgH"/>
    <property type="match status" value="1"/>
</dbReference>
<dbReference type="PRINTS" id="PR01008">
    <property type="entry name" value="FLGLRINGFLGH"/>
</dbReference>
<dbReference type="PROSITE" id="PS51257">
    <property type="entry name" value="PROKAR_LIPOPROTEIN"/>
    <property type="match status" value="1"/>
</dbReference>
<protein>
    <recommendedName>
        <fullName evidence="1">Flagellar L-ring protein</fullName>
    </recommendedName>
    <alternativeName>
        <fullName evidence="1">Basal body L-ring protein</fullName>
    </alternativeName>
</protein>
<feature type="signal peptide" evidence="1">
    <location>
        <begin position="1"/>
        <end position="18"/>
    </location>
</feature>
<feature type="chain" id="PRO_1000050094" description="Flagellar L-ring protein">
    <location>
        <begin position="19"/>
        <end position="231"/>
    </location>
</feature>
<feature type="lipid moiety-binding region" description="N-palmitoyl cysteine" evidence="1">
    <location>
        <position position="19"/>
    </location>
</feature>
<feature type="lipid moiety-binding region" description="S-diacylglycerol cysteine" evidence="1">
    <location>
        <position position="19"/>
    </location>
</feature>
<name>FLGH_PSEE4</name>